<protein>
    <recommendedName>
        <fullName>Wilms tumor protein 1-interacting protein homolog</fullName>
        <shortName>WT1-interacting protein homolog</shortName>
    </recommendedName>
</protein>
<sequence length="648" mass="70901">MDEYDEDPGRRASKLMETLSIYDVYQDGMYGEPNPDMEKTKRMNGSSSTPGNKVYSAAPVRSVNGNRASVPLDFCSPQREAVYPDPDVYCTKSEVALPCYSGASDRLRRYTHAEVQGHRYSTGCAYDGLVLGKQVAVSGARSNSLCMSSPDGRYTATSPRSSLASSHSSQDQSKHTSPRSSISSPRSSLVSPGQGEGTSVISPRSSYASTASDTSKHSSPRTSLNSYDCGSKPSSNRTSGISMGYDQRHISPRSSTTSPRSSYSDSRFTPAGGHDPESAAVHGIPMASPRSSICSQPAVAANCVVSPRSSISSHSSRSSRSSRGSMSAYPELQLPMLGPGLPEDALLQDFTEPNGLHNNRVHLQTFPVLEEPQQQNSEVNIGFNYCKAGAGGQRFKLPYQVTPSRDSGPSQAERRLEALTLELEKELEIHMKKEYFGICVKCGKGVYGASQACQAMGNLYHTNCFTCCSCGRRLRGKAFYNVNGKVYCEEDFLYSGFQQTAEKCFVCGHLIMEMILQALGRSYHPGCFRCVICKEGLDGVPFTVDVENNIYCVKDYHTVFAPKCASCNQPILPAQGSEETIRVVSMDKDYHVDCYHCEDCGLQLNDEEGHRCYPLEGHLLCHRCHLHRLKTPLAPHPPPSYPLHVTEL</sequence>
<accession>A8DZE6</accession>
<reference key="1">
    <citation type="journal article" date="2013" name="Nature">
        <title>The zebrafish reference genome sequence and its relationship to the human genome.</title>
        <authorList>
            <person name="Howe K."/>
            <person name="Clark M.D."/>
            <person name="Torroja C.F."/>
            <person name="Torrance J."/>
            <person name="Berthelot C."/>
            <person name="Muffato M."/>
            <person name="Collins J.E."/>
            <person name="Humphray S."/>
            <person name="McLaren K."/>
            <person name="Matthews L."/>
            <person name="McLaren S."/>
            <person name="Sealy I."/>
            <person name="Caccamo M."/>
            <person name="Churcher C."/>
            <person name="Scott C."/>
            <person name="Barrett J.C."/>
            <person name="Koch R."/>
            <person name="Rauch G.J."/>
            <person name="White S."/>
            <person name="Chow W."/>
            <person name="Kilian B."/>
            <person name="Quintais L.T."/>
            <person name="Guerra-Assuncao J.A."/>
            <person name="Zhou Y."/>
            <person name="Gu Y."/>
            <person name="Yen J."/>
            <person name="Vogel J.H."/>
            <person name="Eyre T."/>
            <person name="Redmond S."/>
            <person name="Banerjee R."/>
            <person name="Chi J."/>
            <person name="Fu B."/>
            <person name="Langley E."/>
            <person name="Maguire S.F."/>
            <person name="Laird G.K."/>
            <person name="Lloyd D."/>
            <person name="Kenyon E."/>
            <person name="Donaldson S."/>
            <person name="Sehra H."/>
            <person name="Almeida-King J."/>
            <person name="Loveland J."/>
            <person name="Trevanion S."/>
            <person name="Jones M."/>
            <person name="Quail M."/>
            <person name="Willey D."/>
            <person name="Hunt A."/>
            <person name="Burton J."/>
            <person name="Sims S."/>
            <person name="McLay K."/>
            <person name="Plumb B."/>
            <person name="Davis J."/>
            <person name="Clee C."/>
            <person name="Oliver K."/>
            <person name="Clark R."/>
            <person name="Riddle C."/>
            <person name="Elliot D."/>
            <person name="Threadgold G."/>
            <person name="Harden G."/>
            <person name="Ware D."/>
            <person name="Begum S."/>
            <person name="Mortimore B."/>
            <person name="Kerry G."/>
            <person name="Heath P."/>
            <person name="Phillimore B."/>
            <person name="Tracey A."/>
            <person name="Corby N."/>
            <person name="Dunn M."/>
            <person name="Johnson C."/>
            <person name="Wood J."/>
            <person name="Clark S."/>
            <person name="Pelan S."/>
            <person name="Griffiths G."/>
            <person name="Smith M."/>
            <person name="Glithero R."/>
            <person name="Howden P."/>
            <person name="Barker N."/>
            <person name="Lloyd C."/>
            <person name="Stevens C."/>
            <person name="Harley J."/>
            <person name="Holt K."/>
            <person name="Panagiotidis G."/>
            <person name="Lovell J."/>
            <person name="Beasley H."/>
            <person name="Henderson C."/>
            <person name="Gordon D."/>
            <person name="Auger K."/>
            <person name="Wright D."/>
            <person name="Collins J."/>
            <person name="Raisen C."/>
            <person name="Dyer L."/>
            <person name="Leung K."/>
            <person name="Robertson L."/>
            <person name="Ambridge K."/>
            <person name="Leongamornlert D."/>
            <person name="McGuire S."/>
            <person name="Gilderthorp R."/>
            <person name="Griffiths C."/>
            <person name="Manthravadi D."/>
            <person name="Nichol S."/>
            <person name="Barker G."/>
            <person name="Whitehead S."/>
            <person name="Kay M."/>
            <person name="Brown J."/>
            <person name="Murnane C."/>
            <person name="Gray E."/>
            <person name="Humphries M."/>
            <person name="Sycamore N."/>
            <person name="Barker D."/>
            <person name="Saunders D."/>
            <person name="Wallis J."/>
            <person name="Babbage A."/>
            <person name="Hammond S."/>
            <person name="Mashreghi-Mohammadi M."/>
            <person name="Barr L."/>
            <person name="Martin S."/>
            <person name="Wray P."/>
            <person name="Ellington A."/>
            <person name="Matthews N."/>
            <person name="Ellwood M."/>
            <person name="Woodmansey R."/>
            <person name="Clark G."/>
            <person name="Cooper J."/>
            <person name="Tromans A."/>
            <person name="Grafham D."/>
            <person name="Skuce C."/>
            <person name="Pandian R."/>
            <person name="Andrews R."/>
            <person name="Harrison E."/>
            <person name="Kimberley A."/>
            <person name="Garnett J."/>
            <person name="Fosker N."/>
            <person name="Hall R."/>
            <person name="Garner P."/>
            <person name="Kelly D."/>
            <person name="Bird C."/>
            <person name="Palmer S."/>
            <person name="Gehring I."/>
            <person name="Berger A."/>
            <person name="Dooley C.M."/>
            <person name="Ersan-Urun Z."/>
            <person name="Eser C."/>
            <person name="Geiger H."/>
            <person name="Geisler M."/>
            <person name="Karotki L."/>
            <person name="Kirn A."/>
            <person name="Konantz J."/>
            <person name="Konantz M."/>
            <person name="Oberlander M."/>
            <person name="Rudolph-Geiger S."/>
            <person name="Teucke M."/>
            <person name="Lanz C."/>
            <person name="Raddatz G."/>
            <person name="Osoegawa K."/>
            <person name="Zhu B."/>
            <person name="Rapp A."/>
            <person name="Widaa S."/>
            <person name="Langford C."/>
            <person name="Yang F."/>
            <person name="Schuster S.C."/>
            <person name="Carter N.P."/>
            <person name="Harrow J."/>
            <person name="Ning Z."/>
            <person name="Herrero J."/>
            <person name="Searle S.M."/>
            <person name="Enright A."/>
            <person name="Geisler R."/>
            <person name="Plasterk R.H."/>
            <person name="Lee C."/>
            <person name="Westerfield M."/>
            <person name="de Jong P.J."/>
            <person name="Zon L.I."/>
            <person name="Postlethwait J.H."/>
            <person name="Nusslein-Volhard C."/>
            <person name="Hubbard T.J."/>
            <person name="Roest Crollius H."/>
            <person name="Rogers J."/>
            <person name="Stemple D.L."/>
        </authorList>
    </citation>
    <scope>NUCLEOTIDE SEQUENCE [LARGE SCALE GENOMIC DNA]</scope>
    <source>
        <strain>Tuebingen</strain>
    </source>
</reference>
<dbReference type="EMBL" id="AL929392">
    <property type="protein sequence ID" value="CAP09265.1"/>
    <property type="molecule type" value="Genomic_DNA"/>
</dbReference>
<dbReference type="RefSeq" id="NP_001116750.2">
    <property type="nucleotide sequence ID" value="NM_001123278.2"/>
</dbReference>
<dbReference type="FunCoup" id="A8DZE6">
    <property type="interactions" value="750"/>
</dbReference>
<dbReference type="STRING" id="7955.ENSDARP00000132856"/>
<dbReference type="PaxDb" id="7955-ENSDARP00000087671"/>
<dbReference type="Ensembl" id="ENSDART00000157564">
    <property type="protein sequence ID" value="ENSDARP00000132856"/>
    <property type="gene ID" value="ENSDARG00000103607"/>
</dbReference>
<dbReference type="GeneID" id="566046"/>
<dbReference type="KEGG" id="dre:566046"/>
<dbReference type="AGR" id="ZFIN:ZDB-GENE-050419-261"/>
<dbReference type="CTD" id="126374"/>
<dbReference type="ZFIN" id="ZDB-GENE-050419-261">
    <property type="gene designation" value="wtip"/>
</dbReference>
<dbReference type="eggNOG" id="KOG1701">
    <property type="taxonomic scope" value="Eukaryota"/>
</dbReference>
<dbReference type="HOGENOM" id="CLU_001357_11_1_1"/>
<dbReference type="InParanoid" id="A8DZE6"/>
<dbReference type="OMA" id="HRFKLPY"/>
<dbReference type="OrthoDB" id="25414at2759"/>
<dbReference type="PhylomeDB" id="A8DZE6"/>
<dbReference type="TreeFam" id="TF320310"/>
<dbReference type="PRO" id="PR:A8DZE6"/>
<dbReference type="Proteomes" id="UP000000437">
    <property type="component" value="Chromosome 18"/>
</dbReference>
<dbReference type="Bgee" id="ENSDARG00000103607">
    <property type="expression patterns" value="Expressed in pharyngeal gill and 23 other cell types or tissues"/>
</dbReference>
<dbReference type="ExpressionAtlas" id="A8DZE6">
    <property type="expression patterns" value="baseline and differential"/>
</dbReference>
<dbReference type="GO" id="GO:0005912">
    <property type="term" value="C:adherens junction"/>
    <property type="evidence" value="ECO:0000318"/>
    <property type="project" value="GO_Central"/>
</dbReference>
<dbReference type="GO" id="GO:0036064">
    <property type="term" value="C:ciliary basal body"/>
    <property type="evidence" value="ECO:0000314"/>
    <property type="project" value="ZFIN"/>
</dbReference>
<dbReference type="GO" id="GO:0005634">
    <property type="term" value="C:nucleus"/>
    <property type="evidence" value="ECO:0000318"/>
    <property type="project" value="GO_Central"/>
</dbReference>
<dbReference type="GO" id="GO:0000932">
    <property type="term" value="C:P-body"/>
    <property type="evidence" value="ECO:0000318"/>
    <property type="project" value="GO_Central"/>
</dbReference>
<dbReference type="GO" id="GO:0005667">
    <property type="term" value="C:transcription regulator complex"/>
    <property type="evidence" value="ECO:0000318"/>
    <property type="project" value="GO_Central"/>
</dbReference>
<dbReference type="GO" id="GO:0046872">
    <property type="term" value="F:metal ion binding"/>
    <property type="evidence" value="ECO:0007669"/>
    <property type="project" value="UniProtKB-KW"/>
</dbReference>
<dbReference type="GO" id="GO:0003714">
    <property type="term" value="F:transcription corepressor activity"/>
    <property type="evidence" value="ECO:0000250"/>
    <property type="project" value="UniProtKB"/>
</dbReference>
<dbReference type="GO" id="GO:0060271">
    <property type="term" value="P:cilium assembly"/>
    <property type="evidence" value="ECO:0000315"/>
    <property type="project" value="ZFIN"/>
</dbReference>
<dbReference type="GO" id="GO:0035844">
    <property type="term" value="P:cloaca development"/>
    <property type="evidence" value="ECO:0000315"/>
    <property type="project" value="ZFIN"/>
</dbReference>
<dbReference type="GO" id="GO:0007010">
    <property type="term" value="P:cytoskeleton organization"/>
    <property type="evidence" value="ECO:0000250"/>
    <property type="project" value="UniProtKB"/>
</dbReference>
<dbReference type="GO" id="GO:0061371">
    <property type="term" value="P:determination of heart left/right asymmetry"/>
    <property type="evidence" value="ECO:0000315"/>
    <property type="project" value="ZFIN"/>
</dbReference>
<dbReference type="GO" id="GO:0003140">
    <property type="term" value="P:determination of left/right asymmetry in lateral mesoderm"/>
    <property type="evidence" value="ECO:0000315"/>
    <property type="project" value="ZFIN"/>
</dbReference>
<dbReference type="GO" id="GO:0000132">
    <property type="term" value="P:establishment of mitotic spindle orientation"/>
    <property type="evidence" value="ECO:0000315"/>
    <property type="project" value="ZFIN"/>
</dbReference>
<dbReference type="GO" id="GO:0001947">
    <property type="term" value="P:heart looping"/>
    <property type="evidence" value="ECO:0000315"/>
    <property type="project" value="ZFIN"/>
</dbReference>
<dbReference type="GO" id="GO:0035331">
    <property type="term" value="P:negative regulation of hippo signaling"/>
    <property type="evidence" value="ECO:0000318"/>
    <property type="project" value="GO_Central"/>
</dbReference>
<dbReference type="GO" id="GO:0014032">
    <property type="term" value="P:neural crest cell development"/>
    <property type="evidence" value="ECO:0000250"/>
    <property type="project" value="UniProtKB"/>
</dbReference>
<dbReference type="GO" id="GO:0010882">
    <property type="term" value="P:regulation of cardiac muscle contraction by calcium ion signaling"/>
    <property type="evidence" value="ECO:0000315"/>
    <property type="project" value="ZFIN"/>
</dbReference>
<dbReference type="GO" id="GO:0022604">
    <property type="term" value="P:regulation of cell morphogenesis"/>
    <property type="evidence" value="ECO:0000250"/>
    <property type="project" value="UniProtKB"/>
</dbReference>
<dbReference type="GO" id="GO:0006355">
    <property type="term" value="P:regulation of DNA-templated transcription"/>
    <property type="evidence" value="ECO:0000318"/>
    <property type="project" value="GO_Central"/>
</dbReference>
<dbReference type="GO" id="GO:0001666">
    <property type="term" value="P:response to hypoxia"/>
    <property type="evidence" value="ECO:0000318"/>
    <property type="project" value="GO_Central"/>
</dbReference>
<dbReference type="GO" id="GO:0061032">
    <property type="term" value="P:visceral serous pericardium development"/>
    <property type="evidence" value="ECO:0000315"/>
    <property type="project" value="ZFIN"/>
</dbReference>
<dbReference type="CDD" id="cd09352">
    <property type="entry name" value="LIM1_Ajuba_like"/>
    <property type="match status" value="1"/>
</dbReference>
<dbReference type="CDD" id="cd09355">
    <property type="entry name" value="LIM2_Ajuba_like"/>
    <property type="match status" value="1"/>
</dbReference>
<dbReference type="CDD" id="cd09438">
    <property type="entry name" value="LIM3_Ajuba_like"/>
    <property type="match status" value="1"/>
</dbReference>
<dbReference type="FunFam" id="2.10.110.10:FF:000028">
    <property type="entry name" value="LIM domain-containing protein 1"/>
    <property type="match status" value="1"/>
</dbReference>
<dbReference type="FunFam" id="2.10.110.10:FF:000036">
    <property type="entry name" value="LIM domain-containing protein 1"/>
    <property type="match status" value="1"/>
</dbReference>
<dbReference type="FunFam" id="2.10.110.10:FF:000037">
    <property type="entry name" value="LIM domain-containing protein 1"/>
    <property type="match status" value="1"/>
</dbReference>
<dbReference type="Gene3D" id="2.10.110.10">
    <property type="entry name" value="Cysteine Rich Protein"/>
    <property type="match status" value="3"/>
</dbReference>
<dbReference type="InterPro" id="IPR047172">
    <property type="entry name" value="Ajuba-like"/>
</dbReference>
<dbReference type="InterPro" id="IPR047245">
    <property type="entry name" value="Ajuba-like_LIM1"/>
</dbReference>
<dbReference type="InterPro" id="IPR047247">
    <property type="entry name" value="Ajuba-like_LIM2"/>
</dbReference>
<dbReference type="InterPro" id="IPR047248">
    <property type="entry name" value="Ajuba-like_LIM3"/>
</dbReference>
<dbReference type="InterPro" id="IPR001781">
    <property type="entry name" value="Znf_LIM"/>
</dbReference>
<dbReference type="PANTHER" id="PTHR24219">
    <property type="entry name" value="LIM DOMAIN-CONTAINING PROTEIN JUB"/>
    <property type="match status" value="1"/>
</dbReference>
<dbReference type="PANTHER" id="PTHR24219:SF6">
    <property type="entry name" value="WILMS TUMOR PROTEIN 1-INTERACTING PROTEIN"/>
    <property type="match status" value="1"/>
</dbReference>
<dbReference type="Pfam" id="PF00412">
    <property type="entry name" value="LIM"/>
    <property type="match status" value="3"/>
</dbReference>
<dbReference type="SMART" id="SM00132">
    <property type="entry name" value="LIM"/>
    <property type="match status" value="3"/>
</dbReference>
<dbReference type="SUPFAM" id="SSF57716">
    <property type="entry name" value="Glucocorticoid receptor-like (DNA-binding domain)"/>
    <property type="match status" value="3"/>
</dbReference>
<dbReference type="PROSITE" id="PS00478">
    <property type="entry name" value="LIM_DOMAIN_1"/>
    <property type="match status" value="2"/>
</dbReference>
<dbReference type="PROSITE" id="PS50023">
    <property type="entry name" value="LIM_DOMAIN_2"/>
    <property type="match status" value="3"/>
</dbReference>
<keyword id="KW-0965">Cell junction</keyword>
<keyword id="KW-0440">LIM domain</keyword>
<keyword id="KW-0479">Metal-binding</keyword>
<keyword id="KW-0539">Nucleus</keyword>
<keyword id="KW-1185">Reference proteome</keyword>
<keyword id="KW-0677">Repeat</keyword>
<keyword id="KW-0678">Repressor</keyword>
<keyword id="KW-0804">Transcription</keyword>
<keyword id="KW-0805">Transcription regulation</keyword>
<keyword id="KW-0862">Zinc</keyword>
<name>WTIP_DANRE</name>
<feature type="chain" id="PRO_0000328862" description="Wilms tumor protein 1-interacting protein homolog">
    <location>
        <begin position="1"/>
        <end position="648"/>
    </location>
</feature>
<feature type="domain" description="LIM zinc-binding 1" evidence="2">
    <location>
        <begin position="437"/>
        <end position="498"/>
    </location>
</feature>
<feature type="domain" description="LIM zinc-binding 2" evidence="2">
    <location>
        <begin position="502"/>
        <end position="561"/>
    </location>
</feature>
<feature type="domain" description="LIM zinc-binding 3" evidence="2">
    <location>
        <begin position="562"/>
        <end position="631"/>
    </location>
</feature>
<feature type="region of interest" description="Disordered" evidence="3">
    <location>
        <begin position="27"/>
        <end position="56"/>
    </location>
</feature>
<feature type="region of interest" description="Disordered" evidence="3">
    <location>
        <begin position="142"/>
        <end position="291"/>
    </location>
</feature>
<feature type="region of interest" description="Disordered" evidence="3">
    <location>
        <begin position="306"/>
        <end position="327"/>
    </location>
</feature>
<feature type="compositionally biased region" description="Low complexity" evidence="3">
    <location>
        <begin position="158"/>
        <end position="171"/>
    </location>
</feature>
<feature type="compositionally biased region" description="Low complexity" evidence="3">
    <location>
        <begin position="178"/>
        <end position="192"/>
    </location>
</feature>
<feature type="compositionally biased region" description="Polar residues" evidence="3">
    <location>
        <begin position="197"/>
        <end position="213"/>
    </location>
</feature>
<feature type="compositionally biased region" description="Polar residues" evidence="3">
    <location>
        <begin position="220"/>
        <end position="241"/>
    </location>
</feature>
<feature type="compositionally biased region" description="Low complexity" evidence="3">
    <location>
        <begin position="252"/>
        <end position="267"/>
    </location>
</feature>
<comment type="function">
    <text evidence="1">May monitor slit diaphragm protein assembly, a specialized adherens junction characteristic of podocytes. In case of podocyte injury, it shuttles into the nucleus and acts as a transcription regulator. Plays a role in the regulation of cell morphology and cytoskeletal organization (By similarity). Acts as a transcriptional corepressor for snai1 and snai2/slug and plays a role in regulating neural crest development (By similarity).</text>
</comment>
<comment type="subcellular location">
    <subcellularLocation>
        <location evidence="1">Cell junction</location>
        <location evidence="1">Adherens junction</location>
    </subcellularLocation>
    <subcellularLocation>
        <location evidence="1">Nucleus</location>
    </subcellularLocation>
</comment>
<comment type="similarity">
    <text evidence="4">Belongs to the zyxin/ajuba family.</text>
</comment>
<proteinExistence type="inferred from homology"/>
<gene>
    <name type="primary">wtip</name>
    <name type="ORF">si:ch211-79l17.3</name>
</gene>
<evidence type="ECO:0000250" key="1"/>
<evidence type="ECO:0000255" key="2">
    <source>
        <dbReference type="PROSITE-ProRule" id="PRU00125"/>
    </source>
</evidence>
<evidence type="ECO:0000256" key="3">
    <source>
        <dbReference type="SAM" id="MobiDB-lite"/>
    </source>
</evidence>
<evidence type="ECO:0000305" key="4"/>
<organism>
    <name type="scientific">Danio rerio</name>
    <name type="common">Zebrafish</name>
    <name type="synonym">Brachydanio rerio</name>
    <dbReference type="NCBI Taxonomy" id="7955"/>
    <lineage>
        <taxon>Eukaryota</taxon>
        <taxon>Metazoa</taxon>
        <taxon>Chordata</taxon>
        <taxon>Craniata</taxon>
        <taxon>Vertebrata</taxon>
        <taxon>Euteleostomi</taxon>
        <taxon>Actinopterygii</taxon>
        <taxon>Neopterygii</taxon>
        <taxon>Teleostei</taxon>
        <taxon>Ostariophysi</taxon>
        <taxon>Cypriniformes</taxon>
        <taxon>Danionidae</taxon>
        <taxon>Danioninae</taxon>
        <taxon>Danio</taxon>
    </lineage>
</organism>